<keyword id="KW-0963">Cytoplasm</keyword>
<keyword id="KW-0489">Methyltransferase</keyword>
<keyword id="KW-0698">rRNA processing</keyword>
<keyword id="KW-0949">S-adenosyl-L-methionine</keyword>
<keyword id="KW-0808">Transferase</keyword>
<proteinExistence type="inferred from homology"/>
<accession>Q48AK7</accession>
<dbReference type="EC" id="2.1.1.242" evidence="1"/>
<dbReference type="EMBL" id="CP000083">
    <property type="protein sequence ID" value="AAZ26823.1"/>
    <property type="molecule type" value="Genomic_DNA"/>
</dbReference>
<dbReference type="SMR" id="Q48AK7"/>
<dbReference type="STRING" id="167879.CPS_0138"/>
<dbReference type="KEGG" id="cps:CPS_0138"/>
<dbReference type="eggNOG" id="COG0742">
    <property type="taxonomic scope" value="Bacteria"/>
</dbReference>
<dbReference type="HOGENOM" id="CLU_076324_0_0_6"/>
<dbReference type="Proteomes" id="UP000000547">
    <property type="component" value="Chromosome"/>
</dbReference>
<dbReference type="GO" id="GO:0005737">
    <property type="term" value="C:cytoplasm"/>
    <property type="evidence" value="ECO:0007669"/>
    <property type="project" value="UniProtKB-SubCell"/>
</dbReference>
<dbReference type="GO" id="GO:0008990">
    <property type="term" value="F:rRNA (guanine-N2-)-methyltransferase activity"/>
    <property type="evidence" value="ECO:0007669"/>
    <property type="project" value="UniProtKB-UniRule"/>
</dbReference>
<dbReference type="CDD" id="cd02440">
    <property type="entry name" value="AdoMet_MTases"/>
    <property type="match status" value="1"/>
</dbReference>
<dbReference type="Gene3D" id="3.40.50.150">
    <property type="entry name" value="Vaccinia Virus protein VP39"/>
    <property type="match status" value="1"/>
</dbReference>
<dbReference type="Gene3D" id="3.40.1630.10">
    <property type="entry name" value="YhiQ-like domain"/>
    <property type="match status" value="1"/>
</dbReference>
<dbReference type="HAMAP" id="MF_01523">
    <property type="entry name" value="16SrRNA_methyltr_J"/>
    <property type="match status" value="1"/>
</dbReference>
<dbReference type="InterPro" id="IPR007536">
    <property type="entry name" value="16SrRNA_methylTrfase_J"/>
</dbReference>
<dbReference type="InterPro" id="IPR029063">
    <property type="entry name" value="SAM-dependent_MTases_sf"/>
</dbReference>
<dbReference type="PANTHER" id="PTHR36112">
    <property type="entry name" value="RIBOSOMAL RNA SMALL SUBUNIT METHYLTRANSFERASE J"/>
    <property type="match status" value="1"/>
</dbReference>
<dbReference type="PANTHER" id="PTHR36112:SF1">
    <property type="entry name" value="RIBOSOMAL RNA SMALL SUBUNIT METHYLTRANSFERASE J"/>
    <property type="match status" value="1"/>
</dbReference>
<dbReference type="Pfam" id="PF04445">
    <property type="entry name" value="SAM_MT"/>
    <property type="match status" value="1"/>
</dbReference>
<dbReference type="SUPFAM" id="SSF53335">
    <property type="entry name" value="S-adenosyl-L-methionine-dependent methyltransferases"/>
    <property type="match status" value="1"/>
</dbReference>
<protein>
    <recommendedName>
        <fullName evidence="1">Ribosomal RNA small subunit methyltransferase J</fullName>
        <ecNumber evidence="1">2.1.1.242</ecNumber>
    </recommendedName>
    <alternativeName>
        <fullName evidence="1">16S rRNA m2G1516 methyltransferase</fullName>
    </alternativeName>
    <alternativeName>
        <fullName evidence="1">rRNA (guanine-N(2)-)-methyltransferase</fullName>
    </alternativeName>
</protein>
<reference key="1">
    <citation type="journal article" date="2005" name="Proc. Natl. Acad. Sci. U.S.A.">
        <title>The psychrophilic lifestyle as revealed by the genome sequence of Colwellia psychrerythraea 34H through genomic and proteomic analyses.</title>
        <authorList>
            <person name="Methe B.A."/>
            <person name="Nelson K.E."/>
            <person name="Deming J.W."/>
            <person name="Momen B."/>
            <person name="Melamud E."/>
            <person name="Zhang X."/>
            <person name="Moult J."/>
            <person name="Madupu R."/>
            <person name="Nelson W.C."/>
            <person name="Dodson R.J."/>
            <person name="Brinkac L.M."/>
            <person name="Daugherty S.C."/>
            <person name="Durkin A.S."/>
            <person name="DeBoy R.T."/>
            <person name="Kolonay J.F."/>
            <person name="Sullivan S.A."/>
            <person name="Zhou L."/>
            <person name="Davidsen T.M."/>
            <person name="Wu M."/>
            <person name="Huston A.L."/>
            <person name="Lewis M."/>
            <person name="Weaver B."/>
            <person name="Weidman J.F."/>
            <person name="Khouri H."/>
            <person name="Utterback T.R."/>
            <person name="Feldblyum T.V."/>
            <person name="Fraser C.M."/>
        </authorList>
    </citation>
    <scope>NUCLEOTIDE SEQUENCE [LARGE SCALE GENOMIC DNA]</scope>
    <source>
        <strain>34H / ATCC BAA-681</strain>
    </source>
</reference>
<feature type="chain" id="PRO_0000244270" description="Ribosomal RNA small subunit methyltransferase J">
    <location>
        <begin position="1"/>
        <end position="272"/>
    </location>
</feature>
<feature type="binding site" evidence="1">
    <location>
        <begin position="120"/>
        <end position="121"/>
    </location>
    <ligand>
        <name>S-adenosyl-L-methionine</name>
        <dbReference type="ChEBI" id="CHEBI:59789"/>
    </ligand>
</feature>
<feature type="binding site" evidence="1">
    <location>
        <begin position="136"/>
        <end position="137"/>
    </location>
    <ligand>
        <name>S-adenosyl-L-methionine</name>
        <dbReference type="ChEBI" id="CHEBI:59789"/>
    </ligand>
</feature>
<feature type="binding site" evidence="1">
    <location>
        <begin position="171"/>
        <end position="172"/>
    </location>
    <ligand>
        <name>S-adenosyl-L-methionine</name>
        <dbReference type="ChEBI" id="CHEBI:59789"/>
    </ligand>
</feature>
<feature type="binding site" evidence="1">
    <location>
        <position position="188"/>
    </location>
    <ligand>
        <name>S-adenosyl-L-methionine</name>
        <dbReference type="ChEBI" id="CHEBI:59789"/>
    </ligand>
</feature>
<comment type="function">
    <text evidence="1">Specifically methylates the guanosine in position 1516 of 16S rRNA.</text>
</comment>
<comment type="catalytic activity">
    <reaction evidence="1">
        <text>guanosine(1516) in 16S rRNA + S-adenosyl-L-methionine = N(2)-methylguanosine(1516) in 16S rRNA + S-adenosyl-L-homocysteine + H(+)</text>
        <dbReference type="Rhea" id="RHEA:43220"/>
        <dbReference type="Rhea" id="RHEA-COMP:10412"/>
        <dbReference type="Rhea" id="RHEA-COMP:10413"/>
        <dbReference type="ChEBI" id="CHEBI:15378"/>
        <dbReference type="ChEBI" id="CHEBI:57856"/>
        <dbReference type="ChEBI" id="CHEBI:59789"/>
        <dbReference type="ChEBI" id="CHEBI:74269"/>
        <dbReference type="ChEBI" id="CHEBI:74481"/>
        <dbReference type="EC" id="2.1.1.242"/>
    </reaction>
</comment>
<comment type="subcellular location">
    <subcellularLocation>
        <location evidence="1">Cytoplasm</location>
    </subcellularLocation>
</comment>
<comment type="similarity">
    <text evidence="1">Belongs to the methyltransferase superfamily. RsmJ family.</text>
</comment>
<name>RSMJ_COLP3</name>
<organism>
    <name type="scientific">Colwellia psychrerythraea (strain 34H / ATCC BAA-681)</name>
    <name type="common">Vibrio psychroerythus</name>
    <dbReference type="NCBI Taxonomy" id="167879"/>
    <lineage>
        <taxon>Bacteria</taxon>
        <taxon>Pseudomonadati</taxon>
        <taxon>Pseudomonadota</taxon>
        <taxon>Gammaproteobacteria</taxon>
        <taxon>Alteromonadales</taxon>
        <taxon>Colwelliaceae</taxon>
        <taxon>Colwellia</taxon>
    </lineage>
</organism>
<gene>
    <name evidence="1" type="primary">rsmJ</name>
    <name type="ordered locus">CPS_0138</name>
</gene>
<evidence type="ECO:0000255" key="1">
    <source>
        <dbReference type="HAMAP-Rule" id="MF_01523"/>
    </source>
</evidence>
<sequence>MSPIIASEHLSNIALGYVDSVDSEYAKRLAKKWQFNYLGHVAAASKQPKLEFMLQMHHHALELCKLDEPKLGAIKVDFVEGAVAHRRKFGGGRGQDIAKAVGLKHGFKPHVLDATAGLGRDAFVLASLGCKLTLLERMPVVAALLDDGIERAKLNHEVADIANNMQLIHGSSLEEVDLAIEPDVVYLDPMYPHREKSAAVKKEMRIFQSLVGEDLDADDLLEPALALAKYRVVVKRPSYAPPLANKKPSMSINMKKNRFDVYVKQAIPKPIT</sequence>